<sequence>MATSRLPAVPEEETTILMAKEELEALRTAFESGDIPQAASRLRELLATTETTRLEVGVTGESGAGKSSLINALRGVGAEDPGAALTGVVETTMQPSPYPHPQFPDVTLWDLPGAGSPGCSADKYLKEVDFGRYDFFLLVSPRRCGAVETRLASEILRQGKKFYFVRTKVDEDLAATRNQRPSGFSEAAVLQEIRDHCAERLRAAGLSDPRIFLVSNLSPNRYDFPMLVTTWEHDLPAHRRHAGLLSLPDISLEALQKKKDMLQEQVLKTALVSGVIQALPVPGLAAAYDDALLIRSLRGYHRSFGLDDDSLAKLAEQVGKQAGDLRSVIRSPLANEVSPETVLRLYSQSSDGAMRVARAFERGIPVFGTLVAGGISFGTVYTMLQGCLNEMAEDAQRVRIKALEEDETQGEVSLEAAGDNAVEKRSSGEGTSEEAPLSTRRKLGLLLKYILDSWKRRDLSEDK</sequence>
<reference key="1">
    <citation type="journal article" date="2004" name="Genome Res.">
        <title>The status, quality, and expansion of the NIH full-length cDNA project: the Mammalian Gene Collection (MGC).</title>
        <authorList>
            <consortium name="The MGC Project Team"/>
        </authorList>
    </citation>
    <scope>NUCLEOTIDE SEQUENCE [LARGE SCALE MRNA]</scope>
    <source>
        <tissue>Testis</tissue>
    </source>
</reference>
<reference key="2">
    <citation type="journal article" date="2012" name="Nat. Commun.">
        <title>Quantitative maps of protein phosphorylation sites across 14 different rat organs and tissues.</title>
        <authorList>
            <person name="Lundby A."/>
            <person name="Secher A."/>
            <person name="Lage K."/>
            <person name="Nordsborg N.B."/>
            <person name="Dmytriyev A."/>
            <person name="Lundby C."/>
            <person name="Olsen J.V."/>
        </authorList>
    </citation>
    <scope>PHOSPHORYLATION [LARGE SCALE ANALYSIS] AT SER-246 AND SER-303</scope>
    <scope>IDENTIFICATION BY MASS SPECTROMETRY [LARGE SCALE ANALYSIS]</scope>
</reference>
<comment type="function">
    <text evidence="3">Required for sperm motility and therefore male fertility, via positive regulation of spermatozoa fibrous sheath formation.</text>
</comment>
<comment type="catalytic activity">
    <reaction>
        <text>GTP + H2O = GDP + phosphate + H(+)</text>
        <dbReference type="Rhea" id="RHEA:19669"/>
        <dbReference type="ChEBI" id="CHEBI:15377"/>
        <dbReference type="ChEBI" id="CHEBI:15378"/>
        <dbReference type="ChEBI" id="CHEBI:37565"/>
        <dbReference type="ChEBI" id="CHEBI:43474"/>
        <dbReference type="ChEBI" id="CHEBI:58189"/>
    </reaction>
</comment>
<comment type="subcellular location">
    <subcellularLocation>
        <location evidence="2">Cell projection</location>
        <location evidence="2">Cilium</location>
        <location evidence="2">Flagellum</location>
    </subcellularLocation>
    <subcellularLocation>
        <location evidence="2">Lipid droplet</location>
    </subcellularLocation>
    <text evidence="2">Expressed in the sperm mitochondrial sheath.</text>
</comment>
<comment type="similarity">
    <text evidence="4 6">Belongs to the TRAFAC class dynamin-like GTPase superfamily. IRG family.</text>
</comment>
<protein>
    <recommendedName>
        <fullName>Interferon-inducible GTPase 5</fullName>
        <ecNumber>3.6.5.-</ecNumber>
    </recommendedName>
    <alternativeName>
        <fullName>Immunity-related GTPase cinema 1</fullName>
    </alternativeName>
</protein>
<gene>
    <name type="primary">Irgc</name>
    <name type="synonym">Iigp5</name>
    <name type="synonym">Irgc1</name>
</gene>
<name>IIGP5_RAT</name>
<evidence type="ECO:0000250" key="1"/>
<evidence type="ECO:0000250" key="2">
    <source>
        <dbReference type="UniProtKB" id="Q6NXR0"/>
    </source>
</evidence>
<evidence type="ECO:0000250" key="3">
    <source>
        <dbReference type="UniProtKB" id="Q8C262"/>
    </source>
</evidence>
<evidence type="ECO:0000255" key="4">
    <source>
        <dbReference type="PROSITE-ProRule" id="PRU01053"/>
    </source>
</evidence>
<evidence type="ECO:0000256" key="5">
    <source>
        <dbReference type="SAM" id="MobiDB-lite"/>
    </source>
</evidence>
<evidence type="ECO:0000305" key="6"/>
<evidence type="ECO:0007744" key="7">
    <source>
    </source>
</evidence>
<proteinExistence type="evidence at protein level"/>
<keyword id="KW-0966">Cell projection</keyword>
<keyword id="KW-0969">Cilium</keyword>
<keyword id="KW-0282">Flagellum</keyword>
<keyword id="KW-0342">GTP-binding</keyword>
<keyword id="KW-0378">Hydrolase</keyword>
<keyword id="KW-0551">Lipid droplet</keyword>
<keyword id="KW-0547">Nucleotide-binding</keyword>
<keyword id="KW-0597">Phosphoprotein</keyword>
<keyword id="KW-1185">Reference proteome</keyword>
<organism>
    <name type="scientific">Rattus norvegicus</name>
    <name type="common">Rat</name>
    <dbReference type="NCBI Taxonomy" id="10116"/>
    <lineage>
        <taxon>Eukaryota</taxon>
        <taxon>Metazoa</taxon>
        <taxon>Chordata</taxon>
        <taxon>Craniata</taxon>
        <taxon>Vertebrata</taxon>
        <taxon>Euteleostomi</taxon>
        <taxon>Mammalia</taxon>
        <taxon>Eutheria</taxon>
        <taxon>Euarchontoglires</taxon>
        <taxon>Glires</taxon>
        <taxon>Rodentia</taxon>
        <taxon>Myomorpha</taxon>
        <taxon>Muroidea</taxon>
        <taxon>Muridae</taxon>
        <taxon>Murinae</taxon>
        <taxon>Rattus</taxon>
    </lineage>
</organism>
<dbReference type="EC" id="3.6.5.-"/>
<dbReference type="EMBL" id="BC079034">
    <property type="protein sequence ID" value="AAH79034.1"/>
    <property type="molecule type" value="mRNA"/>
</dbReference>
<dbReference type="EMBL" id="BC079061">
    <property type="protein sequence ID" value="AAH79061.1"/>
    <property type="molecule type" value="mRNA"/>
</dbReference>
<dbReference type="RefSeq" id="NP_001014038.1">
    <property type="nucleotide sequence ID" value="NM_001014016.1"/>
</dbReference>
<dbReference type="RefSeq" id="XP_006228487.1">
    <property type="nucleotide sequence ID" value="XM_006228425.3"/>
</dbReference>
<dbReference type="RefSeq" id="XP_006228488.1">
    <property type="nucleotide sequence ID" value="XM_006228426.5"/>
</dbReference>
<dbReference type="RefSeq" id="XP_006228489.1">
    <property type="nucleotide sequence ID" value="XM_006228427.5"/>
</dbReference>
<dbReference type="RefSeq" id="XP_008757149.1">
    <property type="nucleotide sequence ID" value="XM_008758927.4"/>
</dbReference>
<dbReference type="RefSeq" id="XP_038967272.1">
    <property type="nucleotide sequence ID" value="XM_039111344.2"/>
</dbReference>
<dbReference type="RefSeq" id="XP_063117422.1">
    <property type="nucleotide sequence ID" value="XM_063261352.1"/>
</dbReference>
<dbReference type="SMR" id="Q6AYF9"/>
<dbReference type="STRING" id="10116.ENSRNOP00000030295"/>
<dbReference type="CarbonylDB" id="Q6AYF9"/>
<dbReference type="iPTMnet" id="Q6AYF9"/>
<dbReference type="PhosphoSitePlus" id="Q6AYF9"/>
<dbReference type="PaxDb" id="10116-ENSRNOP00000030295"/>
<dbReference type="Ensembl" id="ENSRNOT00000030900.4">
    <property type="protein sequence ID" value="ENSRNOP00000030295.3"/>
    <property type="gene ID" value="ENSRNOG00000024257.4"/>
</dbReference>
<dbReference type="Ensembl" id="ENSRNOT00000103829.1">
    <property type="protein sequence ID" value="ENSRNOP00000083551.1"/>
    <property type="gene ID" value="ENSRNOG00000024257.4"/>
</dbReference>
<dbReference type="Ensembl" id="ENSRNOT00000105042.1">
    <property type="protein sequence ID" value="ENSRNOP00000087872.1"/>
    <property type="gene ID" value="ENSRNOG00000024257.4"/>
</dbReference>
<dbReference type="Ensembl" id="ENSRNOT00000115582.1">
    <property type="protein sequence ID" value="ENSRNOP00000090201.1"/>
    <property type="gene ID" value="ENSRNOG00000024257.4"/>
</dbReference>
<dbReference type="Ensembl" id="ENSRNOT00000119560.1">
    <property type="protein sequence ID" value="ENSRNOP00000092074.1"/>
    <property type="gene ID" value="ENSRNOG00000024257.4"/>
</dbReference>
<dbReference type="Ensembl" id="ENSRNOT00000119898.1">
    <property type="protein sequence ID" value="ENSRNOP00000095705.1"/>
    <property type="gene ID" value="ENSRNOG00000024257.4"/>
</dbReference>
<dbReference type="GeneID" id="308428"/>
<dbReference type="KEGG" id="rno:308428"/>
<dbReference type="UCSC" id="RGD:1311107">
    <property type="organism name" value="rat"/>
</dbReference>
<dbReference type="AGR" id="RGD:1311107"/>
<dbReference type="CTD" id="56269"/>
<dbReference type="RGD" id="1311107">
    <property type="gene designation" value="Irgc"/>
</dbReference>
<dbReference type="eggNOG" id="ENOG502QS9R">
    <property type="taxonomic scope" value="Eukaryota"/>
</dbReference>
<dbReference type="GeneTree" id="ENSGT00950000183007"/>
<dbReference type="HOGENOM" id="CLU_015342_2_0_1"/>
<dbReference type="InParanoid" id="Q6AYF9"/>
<dbReference type="OMA" id="MLVSTWE"/>
<dbReference type="OrthoDB" id="422720at2759"/>
<dbReference type="PhylomeDB" id="Q6AYF9"/>
<dbReference type="TreeFam" id="TF331897"/>
<dbReference type="PRO" id="PR:Q6AYF9"/>
<dbReference type="Proteomes" id="UP000002494">
    <property type="component" value="Chromosome 1"/>
</dbReference>
<dbReference type="Bgee" id="ENSRNOG00000024257">
    <property type="expression patterns" value="Expressed in testis and 3 other cell types or tissues"/>
</dbReference>
<dbReference type="ExpressionAtlas" id="Q6AYF9">
    <property type="expression patterns" value="baseline and differential"/>
</dbReference>
<dbReference type="GO" id="GO:0005811">
    <property type="term" value="C:lipid droplet"/>
    <property type="evidence" value="ECO:0000250"/>
    <property type="project" value="UniProtKB"/>
</dbReference>
<dbReference type="GO" id="GO:0016020">
    <property type="term" value="C:membrane"/>
    <property type="evidence" value="ECO:0007669"/>
    <property type="project" value="InterPro"/>
</dbReference>
<dbReference type="GO" id="GO:0036126">
    <property type="term" value="C:sperm flagellum"/>
    <property type="evidence" value="ECO:0000250"/>
    <property type="project" value="UniProtKB"/>
</dbReference>
<dbReference type="GO" id="GO:0097226">
    <property type="term" value="C:sperm mitochondrial sheath"/>
    <property type="evidence" value="ECO:0000250"/>
    <property type="project" value="UniProtKB"/>
</dbReference>
<dbReference type="GO" id="GO:0005525">
    <property type="term" value="F:GTP binding"/>
    <property type="evidence" value="ECO:0007669"/>
    <property type="project" value="UniProtKB-KW"/>
</dbReference>
<dbReference type="GO" id="GO:0003924">
    <property type="term" value="F:GTPase activity"/>
    <property type="evidence" value="ECO:0007669"/>
    <property type="project" value="RHEA"/>
</dbReference>
<dbReference type="GO" id="GO:1902093">
    <property type="term" value="P:positive regulation of flagellated sperm motility"/>
    <property type="evidence" value="ECO:0000250"/>
    <property type="project" value="UniProtKB"/>
</dbReference>
<dbReference type="CDD" id="cd04104">
    <property type="entry name" value="p47_IIGP_like"/>
    <property type="match status" value="1"/>
</dbReference>
<dbReference type="FunFam" id="3.40.50.300:FF:000541">
    <property type="entry name" value="Immunity related GTPase M"/>
    <property type="match status" value="1"/>
</dbReference>
<dbReference type="Gene3D" id="3.40.50.300">
    <property type="entry name" value="P-loop containing nucleotide triphosphate hydrolases"/>
    <property type="match status" value="1"/>
</dbReference>
<dbReference type="InterPro" id="IPR030385">
    <property type="entry name" value="G_IRG_dom"/>
</dbReference>
<dbReference type="InterPro" id="IPR007743">
    <property type="entry name" value="Immunity-related_GTPase-like"/>
</dbReference>
<dbReference type="InterPro" id="IPR051515">
    <property type="entry name" value="IRG"/>
</dbReference>
<dbReference type="InterPro" id="IPR027417">
    <property type="entry name" value="P-loop_NTPase"/>
</dbReference>
<dbReference type="PANTHER" id="PTHR32341">
    <property type="entry name" value="INTERFERON-INDUCIBLE GTPASE"/>
    <property type="match status" value="1"/>
</dbReference>
<dbReference type="PANTHER" id="PTHR32341:SF10">
    <property type="entry name" value="INTERFERON-INDUCIBLE GTPASE 5"/>
    <property type="match status" value="1"/>
</dbReference>
<dbReference type="Pfam" id="PF05049">
    <property type="entry name" value="IIGP"/>
    <property type="match status" value="1"/>
</dbReference>
<dbReference type="SUPFAM" id="SSF52540">
    <property type="entry name" value="P-loop containing nucleoside triphosphate hydrolases"/>
    <property type="match status" value="1"/>
</dbReference>
<dbReference type="PROSITE" id="PS51716">
    <property type="entry name" value="G_IRG"/>
    <property type="match status" value="1"/>
</dbReference>
<accession>Q6AYF9</accession>
<feature type="chain" id="PRO_0000285267" description="Interferon-inducible GTPase 5">
    <location>
        <begin position="1"/>
        <end position="463"/>
    </location>
</feature>
<feature type="domain" description="IRG-type G" evidence="4">
    <location>
        <begin position="52"/>
        <end position="234"/>
    </location>
</feature>
<feature type="region of interest" description="Disordered" evidence="5">
    <location>
        <begin position="409"/>
        <end position="438"/>
    </location>
</feature>
<feature type="binding site" evidence="1">
    <location>
        <begin position="61"/>
        <end position="68"/>
    </location>
    <ligand>
        <name>GTP</name>
        <dbReference type="ChEBI" id="CHEBI:37565"/>
    </ligand>
</feature>
<feature type="binding site" evidence="1">
    <location>
        <begin position="86"/>
        <end position="90"/>
    </location>
    <ligand>
        <name>GTP</name>
        <dbReference type="ChEBI" id="CHEBI:37565"/>
    </ligand>
</feature>
<feature type="binding site" evidence="1">
    <location>
        <begin position="168"/>
        <end position="170"/>
    </location>
    <ligand>
        <name>GTP</name>
        <dbReference type="ChEBI" id="CHEBI:37565"/>
    </ligand>
</feature>
<feature type="binding site" evidence="1">
    <location>
        <begin position="215"/>
        <end position="217"/>
    </location>
    <ligand>
        <name>GTP</name>
        <dbReference type="ChEBI" id="CHEBI:37565"/>
    </ligand>
</feature>
<feature type="modified residue" description="Phosphoserine" evidence="7">
    <location>
        <position position="246"/>
    </location>
</feature>
<feature type="modified residue" description="Phosphoserine" evidence="7">
    <location>
        <position position="303"/>
    </location>
</feature>